<reference key="1">
    <citation type="submission" date="2006-09" db="EMBL/GenBank/DDBJ databases">
        <authorList>
            <consortium name="The Klebsiella pneumonia Genome Sequencing Project"/>
            <person name="McClelland M."/>
            <person name="Sanderson E.K."/>
            <person name="Spieth J."/>
            <person name="Clifton W.S."/>
            <person name="Latreille P."/>
            <person name="Sabo A."/>
            <person name="Pepin K."/>
            <person name="Bhonagiri V."/>
            <person name="Porwollik S."/>
            <person name="Ali J."/>
            <person name="Wilson R.K."/>
        </authorList>
    </citation>
    <scope>NUCLEOTIDE SEQUENCE [LARGE SCALE GENOMIC DNA]</scope>
    <source>
        <strain>ATCC 700721 / MGH 78578</strain>
    </source>
</reference>
<evidence type="ECO:0000255" key="1">
    <source>
        <dbReference type="HAMAP-Rule" id="MF_00578"/>
    </source>
</evidence>
<gene>
    <name evidence="1" type="primary">gshA</name>
    <name type="ordered locus">KPN78578_29640</name>
    <name type="ORF">KPN_03019</name>
</gene>
<proteinExistence type="inferred from homology"/>
<accession>A6TCV4</accession>
<name>GSH1_KLEP7</name>
<organism>
    <name type="scientific">Klebsiella pneumoniae subsp. pneumoniae (strain ATCC 700721 / MGH 78578)</name>
    <dbReference type="NCBI Taxonomy" id="272620"/>
    <lineage>
        <taxon>Bacteria</taxon>
        <taxon>Pseudomonadati</taxon>
        <taxon>Pseudomonadota</taxon>
        <taxon>Gammaproteobacteria</taxon>
        <taxon>Enterobacterales</taxon>
        <taxon>Enterobacteriaceae</taxon>
        <taxon>Klebsiella/Raoultella group</taxon>
        <taxon>Klebsiella</taxon>
        <taxon>Klebsiella pneumoniae complex</taxon>
    </lineage>
</organism>
<sequence length="518" mass="58101">MIPDVSQALAWLEKHPQALQGIQRGLERETLRVNADGTLATTGHPPALGSALTHKWITTDFAEALLEFITPVDGDIEHMLTFMRDVHRYTARQLGDERMWPLSMPCYIAPGQDIELAQYGTSNVGRLKTLYREGLKNRYGALMQTISGVHYNFSLPMAFWQAKCGVEDAESGKEAISAGYFRSIRNYYRFGWVIPYLFGASPAICSSFLQGKPTTLPFEETGNGMYYLPYATSLRLSDLGYTNKSQSNLGITFNDLHEYVAGLKRAIKTPSEEYAKIGLQKDGKYLQINSNILQIENELYAPIRPKRVTRRGETPSDALLRGGIEYIEVRSLDINPFSPIGVDAQQVRFLDLFMVWCALADAPEMSSDELLCTRTNWNRVILEGRKPGLTLGIGCESAQFPLAQVGKDLFRDLRRVAQTLDSIHGGQAYQQVCDELLACFDDPELTFSARILRSMIEEGIGGTGRALADRYRTQLREEPLEILSEDDFIAERDASVARQKKVEAEDSEPFEALLARHA</sequence>
<comment type="catalytic activity">
    <reaction evidence="1">
        <text>L-cysteine + L-glutamate + ATP = gamma-L-glutamyl-L-cysteine + ADP + phosphate + H(+)</text>
        <dbReference type="Rhea" id="RHEA:13285"/>
        <dbReference type="ChEBI" id="CHEBI:15378"/>
        <dbReference type="ChEBI" id="CHEBI:29985"/>
        <dbReference type="ChEBI" id="CHEBI:30616"/>
        <dbReference type="ChEBI" id="CHEBI:35235"/>
        <dbReference type="ChEBI" id="CHEBI:43474"/>
        <dbReference type="ChEBI" id="CHEBI:58173"/>
        <dbReference type="ChEBI" id="CHEBI:456216"/>
        <dbReference type="EC" id="6.3.2.2"/>
    </reaction>
</comment>
<comment type="pathway">
    <text evidence="1">Sulfur metabolism; glutathione biosynthesis; glutathione from L-cysteine and L-glutamate: step 1/2.</text>
</comment>
<comment type="similarity">
    <text evidence="1">Belongs to the glutamate--cysteine ligase type 1 family. Type 1 subfamily.</text>
</comment>
<keyword id="KW-0067">ATP-binding</keyword>
<keyword id="KW-0317">Glutathione biosynthesis</keyword>
<keyword id="KW-0436">Ligase</keyword>
<keyword id="KW-0547">Nucleotide-binding</keyword>
<feature type="chain" id="PRO_1000025175" description="Glutamate--cysteine ligase">
    <location>
        <begin position="1"/>
        <end position="518"/>
    </location>
</feature>
<protein>
    <recommendedName>
        <fullName evidence="1">Glutamate--cysteine ligase</fullName>
        <ecNumber evidence="1">6.3.2.2</ecNumber>
    </recommendedName>
    <alternativeName>
        <fullName evidence="1">Gamma-ECS</fullName>
        <shortName evidence="1">GCS</shortName>
    </alternativeName>
    <alternativeName>
        <fullName evidence="1">Gamma-glutamylcysteine synthetase</fullName>
    </alternativeName>
</protein>
<dbReference type="EC" id="6.3.2.2" evidence="1"/>
<dbReference type="EMBL" id="CP000647">
    <property type="protein sequence ID" value="ABR78425.1"/>
    <property type="molecule type" value="Genomic_DNA"/>
</dbReference>
<dbReference type="RefSeq" id="WP_002914353.1">
    <property type="nucleotide sequence ID" value="NC_009648.1"/>
</dbReference>
<dbReference type="SMR" id="A6TCV4"/>
<dbReference type="STRING" id="272620.KPN_03019"/>
<dbReference type="PaxDb" id="272620-KPN_03019"/>
<dbReference type="EnsemblBacteria" id="ABR78425">
    <property type="protein sequence ID" value="ABR78425"/>
    <property type="gene ID" value="KPN_03019"/>
</dbReference>
<dbReference type="KEGG" id="kpn:KPN_03019"/>
<dbReference type="HOGENOM" id="CLU_020728_3_0_6"/>
<dbReference type="UniPathway" id="UPA00142">
    <property type="reaction ID" value="UER00209"/>
</dbReference>
<dbReference type="Proteomes" id="UP000000265">
    <property type="component" value="Chromosome"/>
</dbReference>
<dbReference type="GO" id="GO:0005829">
    <property type="term" value="C:cytosol"/>
    <property type="evidence" value="ECO:0007669"/>
    <property type="project" value="TreeGrafter"/>
</dbReference>
<dbReference type="GO" id="GO:0005524">
    <property type="term" value="F:ATP binding"/>
    <property type="evidence" value="ECO:0007669"/>
    <property type="project" value="UniProtKB-KW"/>
</dbReference>
<dbReference type="GO" id="GO:0004357">
    <property type="term" value="F:glutamate-cysteine ligase activity"/>
    <property type="evidence" value="ECO:0007669"/>
    <property type="project" value="UniProtKB-UniRule"/>
</dbReference>
<dbReference type="GO" id="GO:0046872">
    <property type="term" value="F:metal ion binding"/>
    <property type="evidence" value="ECO:0007669"/>
    <property type="project" value="TreeGrafter"/>
</dbReference>
<dbReference type="GO" id="GO:0006750">
    <property type="term" value="P:glutathione biosynthetic process"/>
    <property type="evidence" value="ECO:0007669"/>
    <property type="project" value="UniProtKB-UniRule"/>
</dbReference>
<dbReference type="FunFam" id="3.30.590.20:FF:000001">
    <property type="entry name" value="Glutamate--cysteine ligase"/>
    <property type="match status" value="1"/>
</dbReference>
<dbReference type="Gene3D" id="3.30.590.20">
    <property type="match status" value="1"/>
</dbReference>
<dbReference type="HAMAP" id="MF_00578">
    <property type="entry name" value="Glu_cys_ligase"/>
    <property type="match status" value="1"/>
</dbReference>
<dbReference type="InterPro" id="IPR014746">
    <property type="entry name" value="Gln_synth/guanido_kin_cat_dom"/>
</dbReference>
<dbReference type="InterPro" id="IPR007370">
    <property type="entry name" value="Glu_cys_ligase"/>
</dbReference>
<dbReference type="InterPro" id="IPR006334">
    <property type="entry name" value="Glut_cys_ligase"/>
</dbReference>
<dbReference type="NCBIfam" id="TIGR01434">
    <property type="entry name" value="glu_cys_ligase"/>
    <property type="match status" value="1"/>
</dbReference>
<dbReference type="PANTHER" id="PTHR38761">
    <property type="entry name" value="GLUTAMATE--CYSTEINE LIGASE"/>
    <property type="match status" value="1"/>
</dbReference>
<dbReference type="PANTHER" id="PTHR38761:SF1">
    <property type="entry name" value="GLUTAMATE--CYSTEINE LIGASE"/>
    <property type="match status" value="1"/>
</dbReference>
<dbReference type="Pfam" id="PF04262">
    <property type="entry name" value="Glu_cys_ligase"/>
    <property type="match status" value="1"/>
</dbReference>
<dbReference type="SUPFAM" id="SSF55931">
    <property type="entry name" value="Glutamine synthetase/guanido kinase"/>
    <property type="match status" value="1"/>
</dbReference>